<protein>
    <recommendedName>
        <fullName>Gene 13 protein</fullName>
    </recommendedName>
    <alternativeName>
        <fullName>Gp13</fullName>
    </alternativeName>
</protein>
<sequence length="595" mass="66397">MSLDNHHPELAPSPPHIIGPSWQKTVDGDWHLPDPKMTLGWGVLKWLSEYVNTPGGHDDPNRLKVLISLSEAGLLENENMFIPTDEQVRLVLWWYAVDEKGQYVYREGVIRRLKGWGKDPFTAALCLAELCGPVAFSHFDETGQAIGKPRPAAWITVAAVSQDQTKNTFSLFPVMISKKLKTEYGLDVNRFIIYSAAGGRIEAATSSPASMEGNRPTFVVQNETQWWGQGPDGKANEGHAMAEVIEGNMTKVEGSRTLSICNAHIPGTETVAEKAYVEWQDVQSGKSVDTGMMYDALEAPADTPISEIPSEKENPDGFREGIEKLREGLLIARGDSTWLPIDDIIKSILSTKNSITESRRKFLNQVNAAEDSWLSPQEWNRCFADPDKYLDKMGFELAPLDRGQKITLGFDGSKSNDWTALVGCRVSDGLLFVIDIWDPQKYGGEVPREFVDAAVHSAFSRYDVVAFRADVKEFEAYVDSWGRTYKKKLKVNASPNNPVAFDMRGQQKRFAFDCERLEDAVLEGEVWHDGNPVLRQHVLNAKRHPTTYDAIAIRKVTKDSSKKIDAAVCAVLAFGARQDYLMSKKARTGRVVAVR</sequence>
<accession>O64206</accession>
<feature type="chain" id="PRO_0000164714" description="Gene 13 protein">
    <location>
        <begin position="1"/>
        <end position="595"/>
    </location>
</feature>
<comment type="similarity">
    <text evidence="1">Belongs to the phage terminase family.</text>
</comment>
<name>VG13_BPMD2</name>
<keyword id="KW-1185">Reference proteome</keyword>
<organism>
    <name type="scientific">Mycobacterium phage D29</name>
    <name type="common">Mycobacteriophage D29</name>
    <dbReference type="NCBI Taxonomy" id="28369"/>
    <lineage>
        <taxon>Viruses</taxon>
        <taxon>Duplodnaviria</taxon>
        <taxon>Heunggongvirae</taxon>
        <taxon>Uroviricota</taxon>
        <taxon>Caudoviricetes</taxon>
        <taxon>Fromanvirus</taxon>
    </lineage>
</organism>
<reference key="1">
    <citation type="journal article" date="1998" name="J. Mol. Biol.">
        <title>Genome structure of mycobacteriophage D29: implications for phage evolution.</title>
        <authorList>
            <person name="Ford M.E."/>
            <person name="Sarkis G.J."/>
            <person name="Belanger A.E."/>
            <person name="Hendrix R.W."/>
            <person name="Hatfull G.F."/>
        </authorList>
    </citation>
    <scope>NUCLEOTIDE SEQUENCE [LARGE SCALE GENOMIC DNA]</scope>
</reference>
<dbReference type="EMBL" id="AF022214">
    <property type="protein sequence ID" value="AAC18453.1"/>
    <property type="molecule type" value="Genomic_DNA"/>
</dbReference>
<dbReference type="PIR" id="B72801">
    <property type="entry name" value="B72801"/>
</dbReference>
<dbReference type="RefSeq" id="NP_046828.1">
    <property type="nucleotide sequence ID" value="NC_001900.1"/>
</dbReference>
<dbReference type="SMR" id="O64206"/>
<dbReference type="GeneID" id="1261617"/>
<dbReference type="KEGG" id="vg:1261617"/>
<dbReference type="OrthoDB" id="1044at10239"/>
<dbReference type="Proteomes" id="UP000002131">
    <property type="component" value="Segment"/>
</dbReference>
<gene>
    <name type="primary">13</name>
</gene>
<organismHost>
    <name type="scientific">Mycobacterium</name>
    <dbReference type="NCBI Taxonomy" id="1763"/>
</organismHost>
<proteinExistence type="inferred from homology"/>
<evidence type="ECO:0000305" key="1"/>